<reference key="1">
    <citation type="journal article" date="1998" name="Nature">
        <title>Deciphering the biology of Mycobacterium tuberculosis from the complete genome sequence.</title>
        <authorList>
            <person name="Cole S.T."/>
            <person name="Brosch R."/>
            <person name="Parkhill J."/>
            <person name="Garnier T."/>
            <person name="Churcher C.M."/>
            <person name="Harris D.E."/>
            <person name="Gordon S.V."/>
            <person name="Eiglmeier K."/>
            <person name="Gas S."/>
            <person name="Barry C.E. III"/>
            <person name="Tekaia F."/>
            <person name="Badcock K."/>
            <person name="Basham D."/>
            <person name="Brown D."/>
            <person name="Chillingworth T."/>
            <person name="Connor R."/>
            <person name="Davies R.M."/>
            <person name="Devlin K."/>
            <person name="Feltwell T."/>
            <person name="Gentles S."/>
            <person name="Hamlin N."/>
            <person name="Holroyd S."/>
            <person name="Hornsby T."/>
            <person name="Jagels K."/>
            <person name="Krogh A."/>
            <person name="McLean J."/>
            <person name="Moule S."/>
            <person name="Murphy L.D."/>
            <person name="Oliver S."/>
            <person name="Osborne J."/>
            <person name="Quail M.A."/>
            <person name="Rajandream M.A."/>
            <person name="Rogers J."/>
            <person name="Rutter S."/>
            <person name="Seeger K."/>
            <person name="Skelton S."/>
            <person name="Squares S."/>
            <person name="Squares R."/>
            <person name="Sulston J.E."/>
            <person name="Taylor K."/>
            <person name="Whitehead S."/>
            <person name="Barrell B.G."/>
        </authorList>
    </citation>
    <scope>NUCLEOTIDE SEQUENCE [LARGE SCALE GENOMIC DNA]</scope>
    <source>
        <strain>ATCC 25618 / H37Rv</strain>
    </source>
</reference>
<reference key="2">
    <citation type="journal article" date="2011" name="Mol. Cell. Proteomics">
        <title>Proteogenomic analysis of Mycobacterium tuberculosis by high resolution mass spectrometry.</title>
        <authorList>
            <person name="Kelkar D.S."/>
            <person name="Kumar D."/>
            <person name="Kumar P."/>
            <person name="Balakrishnan L."/>
            <person name="Muthusamy B."/>
            <person name="Yadav A.K."/>
            <person name="Shrivastava P."/>
            <person name="Marimuthu A."/>
            <person name="Anand S."/>
            <person name="Sundaram H."/>
            <person name="Kingsbury R."/>
            <person name="Harsha H.C."/>
            <person name="Nair B."/>
            <person name="Prasad T.S."/>
            <person name="Chauhan D.S."/>
            <person name="Katoch K."/>
            <person name="Katoch V.M."/>
            <person name="Kumar P."/>
            <person name="Chaerkady R."/>
            <person name="Ramachandran S."/>
            <person name="Dash D."/>
            <person name="Pandey A."/>
        </authorList>
    </citation>
    <scope>IDENTIFICATION BY MASS SPECTROMETRY [LARGE SCALE ANALYSIS]</scope>
    <source>
        <strain>ATCC 25618 / H37Rv</strain>
    </source>
</reference>
<accession>P9WN59</accession>
<accession>L0TE24</accession>
<accession>O53259</accession>
<accession>P64205</accession>
<proteinExistence type="evidence at protein level"/>
<gene>
    <name type="primary">gatC</name>
    <name type="ordered locus">Rv3012c</name>
    <name type="ORF">MTV012.26c</name>
</gene>
<feature type="chain" id="PRO_0000105312" description="Glutamyl-tRNA(Gln) amidotransferase subunit C">
    <location>
        <begin position="1"/>
        <end position="99"/>
    </location>
</feature>
<sequence>MSQISRDEVAHLARLARLALTETELDSFAGQLDAILTHVSQIQAVDVTGVQATDNPLKDVNVTRPDETVPCLTQRQVLDQAPDAVDGRFAVPQILGDEQ</sequence>
<keyword id="KW-0067">ATP-binding</keyword>
<keyword id="KW-0436">Ligase</keyword>
<keyword id="KW-0547">Nucleotide-binding</keyword>
<keyword id="KW-0648">Protein biosynthesis</keyword>
<keyword id="KW-1185">Reference proteome</keyword>
<evidence type="ECO:0000250" key="1"/>
<evidence type="ECO:0000305" key="2"/>
<name>GATC_MYCTU</name>
<comment type="function">
    <text evidence="1">Allows the formation of correctly charged Asn-tRNA(Asn) or Gln-tRNA(Gln) through the transamidation of misacylated Asp-tRNA(Asn) or Glu-tRNA(Gln) in organisms which lack either or both of asparaginyl-tRNA or glutaminyl-tRNA synthetases. The reaction takes place in the presence of glutamine and ATP through an activated phospho-Asp-tRNA(Asn) or phospho-Glu-tRNA(Gln) (By similarity).</text>
</comment>
<comment type="catalytic activity">
    <reaction>
        <text>L-glutamyl-tRNA(Gln) + L-glutamine + ATP + H2O = L-glutaminyl-tRNA(Gln) + L-glutamate + ADP + phosphate + H(+)</text>
        <dbReference type="Rhea" id="RHEA:17521"/>
        <dbReference type="Rhea" id="RHEA-COMP:9681"/>
        <dbReference type="Rhea" id="RHEA-COMP:9684"/>
        <dbReference type="ChEBI" id="CHEBI:15377"/>
        <dbReference type="ChEBI" id="CHEBI:15378"/>
        <dbReference type="ChEBI" id="CHEBI:29985"/>
        <dbReference type="ChEBI" id="CHEBI:30616"/>
        <dbReference type="ChEBI" id="CHEBI:43474"/>
        <dbReference type="ChEBI" id="CHEBI:58359"/>
        <dbReference type="ChEBI" id="CHEBI:78520"/>
        <dbReference type="ChEBI" id="CHEBI:78521"/>
        <dbReference type="ChEBI" id="CHEBI:456216"/>
    </reaction>
</comment>
<comment type="catalytic activity">
    <reaction>
        <text>L-aspartyl-tRNA(Asn) + L-glutamine + ATP + H2O = L-asparaginyl-tRNA(Asn) + L-glutamate + ADP + phosphate + 2 H(+)</text>
        <dbReference type="Rhea" id="RHEA:14513"/>
        <dbReference type="Rhea" id="RHEA-COMP:9674"/>
        <dbReference type="Rhea" id="RHEA-COMP:9677"/>
        <dbReference type="ChEBI" id="CHEBI:15377"/>
        <dbReference type="ChEBI" id="CHEBI:15378"/>
        <dbReference type="ChEBI" id="CHEBI:29985"/>
        <dbReference type="ChEBI" id="CHEBI:30616"/>
        <dbReference type="ChEBI" id="CHEBI:43474"/>
        <dbReference type="ChEBI" id="CHEBI:58359"/>
        <dbReference type="ChEBI" id="CHEBI:78515"/>
        <dbReference type="ChEBI" id="CHEBI:78516"/>
        <dbReference type="ChEBI" id="CHEBI:456216"/>
    </reaction>
</comment>
<comment type="subunit">
    <text evidence="1">Heterotrimer of A, B and C subunits.</text>
</comment>
<comment type="similarity">
    <text evidence="2">Belongs to the GatC family.</text>
</comment>
<protein>
    <recommendedName>
        <fullName>Glutamyl-tRNA(Gln) amidotransferase subunit C</fullName>
        <shortName>Glu-ADT subunit C</shortName>
        <ecNumber>6.3.5.-</ecNumber>
    </recommendedName>
</protein>
<organism>
    <name type="scientific">Mycobacterium tuberculosis (strain ATCC 25618 / H37Rv)</name>
    <dbReference type="NCBI Taxonomy" id="83332"/>
    <lineage>
        <taxon>Bacteria</taxon>
        <taxon>Bacillati</taxon>
        <taxon>Actinomycetota</taxon>
        <taxon>Actinomycetes</taxon>
        <taxon>Mycobacteriales</taxon>
        <taxon>Mycobacteriaceae</taxon>
        <taxon>Mycobacterium</taxon>
        <taxon>Mycobacterium tuberculosis complex</taxon>
    </lineage>
</organism>
<dbReference type="EC" id="6.3.5.-"/>
<dbReference type="EMBL" id="AL123456">
    <property type="protein sequence ID" value="CCP45818.1"/>
    <property type="molecule type" value="Genomic_DNA"/>
</dbReference>
<dbReference type="PIR" id="G70856">
    <property type="entry name" value="G70856"/>
</dbReference>
<dbReference type="RefSeq" id="NP_217528.1">
    <property type="nucleotide sequence ID" value="NC_000962.3"/>
</dbReference>
<dbReference type="RefSeq" id="WP_003415256.1">
    <property type="nucleotide sequence ID" value="NZ_NVQJ01000041.1"/>
</dbReference>
<dbReference type="SMR" id="P9WN59"/>
<dbReference type="FunCoup" id="P9WN59">
    <property type="interactions" value="76"/>
</dbReference>
<dbReference type="STRING" id="83332.Rv3012c"/>
<dbReference type="PaxDb" id="83332-Rv3012c"/>
<dbReference type="DNASU" id="887335"/>
<dbReference type="GeneID" id="45427002"/>
<dbReference type="GeneID" id="887335"/>
<dbReference type="KEGG" id="mtu:Rv3012c"/>
<dbReference type="KEGG" id="mtv:RVBD_3012c"/>
<dbReference type="TubercuList" id="Rv3012c"/>
<dbReference type="eggNOG" id="COG0721">
    <property type="taxonomic scope" value="Bacteria"/>
</dbReference>
<dbReference type="InParanoid" id="P9WN59"/>
<dbReference type="OrthoDB" id="5295223at2"/>
<dbReference type="PhylomeDB" id="P9WN59"/>
<dbReference type="Proteomes" id="UP000001584">
    <property type="component" value="Chromosome"/>
</dbReference>
<dbReference type="GO" id="GO:0009274">
    <property type="term" value="C:peptidoglycan-based cell wall"/>
    <property type="evidence" value="ECO:0007005"/>
    <property type="project" value="MTBBASE"/>
</dbReference>
<dbReference type="GO" id="GO:0050566">
    <property type="term" value="F:asparaginyl-tRNA synthase (glutamine-hydrolyzing) activity"/>
    <property type="evidence" value="ECO:0007669"/>
    <property type="project" value="RHEA"/>
</dbReference>
<dbReference type="GO" id="GO:0005524">
    <property type="term" value="F:ATP binding"/>
    <property type="evidence" value="ECO:0007669"/>
    <property type="project" value="UniProtKB-KW"/>
</dbReference>
<dbReference type="GO" id="GO:0050567">
    <property type="term" value="F:glutaminyl-tRNA synthase (glutamine-hydrolyzing) activity"/>
    <property type="evidence" value="ECO:0007669"/>
    <property type="project" value="UniProtKB-UniRule"/>
</dbReference>
<dbReference type="GO" id="GO:0070681">
    <property type="term" value="P:glutaminyl-tRNAGln biosynthesis via transamidation"/>
    <property type="evidence" value="ECO:0000318"/>
    <property type="project" value="GO_Central"/>
</dbReference>
<dbReference type="GO" id="GO:0006450">
    <property type="term" value="P:regulation of translational fidelity"/>
    <property type="evidence" value="ECO:0007669"/>
    <property type="project" value="InterPro"/>
</dbReference>
<dbReference type="GO" id="GO:0006412">
    <property type="term" value="P:translation"/>
    <property type="evidence" value="ECO:0007669"/>
    <property type="project" value="UniProtKB-UniRule"/>
</dbReference>
<dbReference type="FunFam" id="1.10.20.60:FF:000001">
    <property type="entry name" value="Aspartyl/glutamyl-tRNA(Asn/Gln) amidotransferase subunit C"/>
    <property type="match status" value="1"/>
</dbReference>
<dbReference type="Gene3D" id="1.10.20.60">
    <property type="entry name" value="Glu-tRNAGln amidotransferase C subunit, N-terminal domain"/>
    <property type="match status" value="1"/>
</dbReference>
<dbReference type="HAMAP" id="MF_00122">
    <property type="entry name" value="GatC"/>
    <property type="match status" value="1"/>
</dbReference>
<dbReference type="InterPro" id="IPR036113">
    <property type="entry name" value="Asp/Glu-ADT_sf_sub_c"/>
</dbReference>
<dbReference type="InterPro" id="IPR003837">
    <property type="entry name" value="GatC"/>
</dbReference>
<dbReference type="NCBIfam" id="TIGR00135">
    <property type="entry name" value="gatC"/>
    <property type="match status" value="1"/>
</dbReference>
<dbReference type="PANTHER" id="PTHR15004">
    <property type="entry name" value="GLUTAMYL-TRNA(GLN) AMIDOTRANSFERASE SUBUNIT C, MITOCHONDRIAL"/>
    <property type="match status" value="1"/>
</dbReference>
<dbReference type="PANTHER" id="PTHR15004:SF0">
    <property type="entry name" value="GLUTAMYL-TRNA(GLN) AMIDOTRANSFERASE SUBUNIT C, MITOCHONDRIAL"/>
    <property type="match status" value="1"/>
</dbReference>
<dbReference type="Pfam" id="PF02686">
    <property type="entry name" value="GatC"/>
    <property type="match status" value="1"/>
</dbReference>
<dbReference type="SUPFAM" id="SSF141000">
    <property type="entry name" value="Glu-tRNAGln amidotransferase C subunit"/>
    <property type="match status" value="1"/>
</dbReference>